<evidence type="ECO:0000250" key="1">
    <source>
        <dbReference type="UniProtKB" id="A2AFS9"/>
    </source>
</evidence>
<evidence type="ECO:0000255" key="2">
    <source>
        <dbReference type="PROSITE-ProRule" id="PRU00322"/>
    </source>
</evidence>
<evidence type="ECO:0000256" key="3">
    <source>
        <dbReference type="SAM" id="MobiDB-lite"/>
    </source>
</evidence>
<evidence type="ECO:0000269" key="4">
    <source>
    </source>
</evidence>
<evidence type="ECO:0000305" key="5"/>
<evidence type="ECO:0000312" key="6">
    <source>
        <dbReference type="HGNC" id="HGNC:11735"/>
    </source>
</evidence>
<gene>
    <name evidence="6" type="primary">TEX13A</name>
</gene>
<protein>
    <recommendedName>
        <fullName evidence="5">Testis-expressed protein 13A</fullName>
    </recommendedName>
</protein>
<sequence length="409" mass="45583">MALRPEDPSSGFRHSNVVAFINEKMARHTKGPEFYLENISLSWEKVEDKLRAILEDSEVPSEVKEACTWGSLALGVRFAHRQAQLQRHRVRWLHGFAKLHKSAAQALASDLKKLREQQETERKEAASRLRMAQTSLVEVQKERDKELVSPHEWEQGAGWPGLATAGGVCTEGAAEEEEEAAVAAAGAAGGKGAEEEQRDVEVVAAPVEAMAPPVEAGAAPMETQFPHVEARAASMETTEKLERILLQLLGDADQEKYTYWGQKEGDLRSVETATSYFSGTTNPWSRASSEPLPVQLPASYSYSYSSPFSSFSDIPTISPPQATVTAPVPPQLPSDWEAFDTSLWSDGGPHRIDHQEHPRDRRYSEPHQQRPPVYRRPGDWDCPWCNAVNFSRRDTCFDCGKGIWLQKPH</sequence>
<dbReference type="EMBL" id="AF285597">
    <property type="protein sequence ID" value="AAK31976.1"/>
    <property type="molecule type" value="mRNA"/>
</dbReference>
<dbReference type="EMBL" id="Z74477">
    <property type="status" value="NOT_ANNOTATED_CDS"/>
    <property type="molecule type" value="Genomic_DNA"/>
</dbReference>
<dbReference type="EMBL" id="BC042547">
    <property type="protein sequence ID" value="AAH42547.1"/>
    <property type="molecule type" value="mRNA"/>
</dbReference>
<dbReference type="EMBL" id="BC108734">
    <property type="protein sequence ID" value="AAI08735.1"/>
    <property type="molecule type" value="mRNA"/>
</dbReference>
<dbReference type="CCDS" id="CCDS76005.1"/>
<dbReference type="RefSeq" id="NP_001278206.1">
    <property type="nucleotide sequence ID" value="NM_001291277.2"/>
</dbReference>
<dbReference type="RefSeq" id="NP_112564.1">
    <property type="nucleotide sequence ID" value="NM_031274.5"/>
</dbReference>
<dbReference type="BMRB" id="Q9BXU3"/>
<dbReference type="SMR" id="Q9BXU3"/>
<dbReference type="BioGRID" id="121091">
    <property type="interactions" value="26"/>
</dbReference>
<dbReference type="FunCoup" id="Q9BXU3">
    <property type="interactions" value="17"/>
</dbReference>
<dbReference type="IntAct" id="Q9BXU3">
    <property type="interactions" value="27"/>
</dbReference>
<dbReference type="STRING" id="9606.ENSP00000471604"/>
<dbReference type="iPTMnet" id="Q9BXU3"/>
<dbReference type="PhosphoSitePlus" id="Q9BXU3"/>
<dbReference type="BioMuta" id="TEX13A"/>
<dbReference type="DMDM" id="50401671"/>
<dbReference type="jPOST" id="Q9BXU3"/>
<dbReference type="MassIVE" id="Q9BXU3"/>
<dbReference type="PaxDb" id="9606-ENSP00000471604"/>
<dbReference type="PeptideAtlas" id="Q9BXU3"/>
<dbReference type="ProteomicsDB" id="79520"/>
<dbReference type="Antibodypedia" id="72864">
    <property type="antibodies" value="106 antibodies from 19 providers"/>
</dbReference>
<dbReference type="DNASU" id="56157"/>
<dbReference type="Ensembl" id="ENST00000600991.6">
    <property type="protein sequence ID" value="ENSP00000471604.2"/>
    <property type="gene ID" value="ENSG00000268629.8"/>
</dbReference>
<dbReference type="Ensembl" id="ENST00000609007.3">
    <property type="protein sequence ID" value="ENSP00000477478.2"/>
    <property type="gene ID" value="ENSG00000268629.8"/>
</dbReference>
<dbReference type="GeneID" id="56157"/>
<dbReference type="KEGG" id="hsa:56157"/>
<dbReference type="MANE-Select" id="ENST00000600991.6">
    <property type="protein sequence ID" value="ENSP00000471604.2"/>
    <property type="RefSeq nucleotide sequence ID" value="NM_031274.5"/>
    <property type="RefSeq protein sequence ID" value="NP_112564.1"/>
</dbReference>
<dbReference type="UCSC" id="uc033epz.1">
    <property type="organism name" value="human"/>
</dbReference>
<dbReference type="AGR" id="HGNC:11735"/>
<dbReference type="CTD" id="56157"/>
<dbReference type="DisGeNET" id="56157"/>
<dbReference type="GeneCards" id="TEX13A"/>
<dbReference type="HGNC" id="HGNC:11735">
    <property type="gene designation" value="TEX13A"/>
</dbReference>
<dbReference type="HPA" id="ENSG00000268629">
    <property type="expression patterns" value="Tissue enriched (testis)"/>
</dbReference>
<dbReference type="MIM" id="300312">
    <property type="type" value="gene"/>
</dbReference>
<dbReference type="neXtProt" id="NX_Q9BXU3"/>
<dbReference type="OpenTargets" id="ENSG00000268629"/>
<dbReference type="PharmGKB" id="PA36452"/>
<dbReference type="VEuPathDB" id="HostDB:ENSG00000268629"/>
<dbReference type="eggNOG" id="KOG4198">
    <property type="taxonomic scope" value="Eukaryota"/>
</dbReference>
<dbReference type="GeneTree" id="ENSGT00940000164308"/>
<dbReference type="HOGENOM" id="CLU_736812_0_0_1"/>
<dbReference type="InParanoid" id="Q9BXU3"/>
<dbReference type="OMA" id="NYTYWGQ"/>
<dbReference type="OrthoDB" id="448399at2759"/>
<dbReference type="PAN-GO" id="Q9BXU3">
    <property type="GO annotations" value="2 GO annotations based on evolutionary models"/>
</dbReference>
<dbReference type="PhylomeDB" id="Q9BXU3"/>
<dbReference type="TreeFam" id="TF337208"/>
<dbReference type="PathwayCommons" id="Q9BXU3"/>
<dbReference type="SignaLink" id="Q9BXU3"/>
<dbReference type="BioGRID-ORCS" id="56157">
    <property type="hits" value="11 hits in 348 CRISPR screens"/>
</dbReference>
<dbReference type="GenomeRNAi" id="56157"/>
<dbReference type="Pharos" id="Q9BXU3">
    <property type="development level" value="Tdark"/>
</dbReference>
<dbReference type="PRO" id="PR:Q9BXU3"/>
<dbReference type="Proteomes" id="UP000005640">
    <property type="component" value="Chromosome X"/>
</dbReference>
<dbReference type="RNAct" id="Q9BXU3">
    <property type="molecule type" value="protein"/>
</dbReference>
<dbReference type="Bgee" id="ENSG00000268629">
    <property type="expression patterns" value="Expressed in sperm and 16 other cell types or tissues"/>
</dbReference>
<dbReference type="GO" id="GO:0003729">
    <property type="term" value="F:mRNA binding"/>
    <property type="evidence" value="ECO:0000318"/>
    <property type="project" value="GO_Central"/>
</dbReference>
<dbReference type="GO" id="GO:0008270">
    <property type="term" value="F:zinc ion binding"/>
    <property type="evidence" value="ECO:0007669"/>
    <property type="project" value="UniProtKB-KW"/>
</dbReference>
<dbReference type="Gene3D" id="4.10.1060.10">
    <property type="entry name" value="Zinc finger, RanBP2-type"/>
    <property type="match status" value="1"/>
</dbReference>
<dbReference type="InterPro" id="IPR028193">
    <property type="entry name" value="TEX13A-D_N"/>
</dbReference>
<dbReference type="InterPro" id="IPR054602">
    <property type="entry name" value="TEX13A/B_middle"/>
</dbReference>
<dbReference type="InterPro" id="IPR049534">
    <property type="entry name" value="TEX13A/C/D_Znf"/>
</dbReference>
<dbReference type="InterPro" id="IPR001876">
    <property type="entry name" value="Znf_RanBP2"/>
</dbReference>
<dbReference type="InterPro" id="IPR036443">
    <property type="entry name" value="Znf_RanBP2_sf"/>
</dbReference>
<dbReference type="PANTHER" id="PTHR23111:SF64">
    <property type="entry name" value="TESTIS-EXPRESSED PROTEIN 13A"/>
    <property type="match status" value="1"/>
</dbReference>
<dbReference type="PANTHER" id="PTHR23111">
    <property type="entry name" value="ZINC FINGER PROTEIN"/>
    <property type="match status" value="1"/>
</dbReference>
<dbReference type="Pfam" id="PF15186">
    <property type="entry name" value="TEX13"/>
    <property type="match status" value="1"/>
</dbReference>
<dbReference type="Pfam" id="PF22835">
    <property type="entry name" value="TEX13B-like_middle"/>
    <property type="match status" value="1"/>
</dbReference>
<dbReference type="Pfam" id="PF20864">
    <property type="entry name" value="Zn_ribbon_TEX13"/>
    <property type="match status" value="1"/>
</dbReference>
<dbReference type="SUPFAM" id="SSF90209">
    <property type="entry name" value="Ran binding protein zinc finger-like"/>
    <property type="match status" value="1"/>
</dbReference>
<dbReference type="PROSITE" id="PS01358">
    <property type="entry name" value="ZF_RANBP2_1"/>
    <property type="match status" value="1"/>
</dbReference>
<dbReference type="PROSITE" id="PS50199">
    <property type="entry name" value="ZF_RANBP2_2"/>
    <property type="match status" value="1"/>
</dbReference>
<name>TX13A_HUMAN</name>
<organism>
    <name type="scientific">Homo sapiens</name>
    <name type="common">Human</name>
    <dbReference type="NCBI Taxonomy" id="9606"/>
    <lineage>
        <taxon>Eukaryota</taxon>
        <taxon>Metazoa</taxon>
        <taxon>Chordata</taxon>
        <taxon>Craniata</taxon>
        <taxon>Vertebrata</taxon>
        <taxon>Euteleostomi</taxon>
        <taxon>Mammalia</taxon>
        <taxon>Eutheria</taxon>
        <taxon>Euarchontoglires</taxon>
        <taxon>Primates</taxon>
        <taxon>Haplorrhini</taxon>
        <taxon>Catarrhini</taxon>
        <taxon>Hominidae</taxon>
        <taxon>Homo</taxon>
    </lineage>
</organism>
<feature type="chain" id="PRO_0000065700" description="Testis-expressed protein 13A">
    <location>
        <begin position="1"/>
        <end position="409"/>
    </location>
</feature>
<feature type="zinc finger region" description="RanBP2-type" evidence="2">
    <location>
        <begin position="376"/>
        <end position="400"/>
    </location>
</feature>
<feature type="region of interest" description="Required for repression of transcription" evidence="1">
    <location>
        <begin position="92"/>
        <end position="408"/>
    </location>
</feature>
<feature type="region of interest" description="Disordered" evidence="3">
    <location>
        <begin position="347"/>
        <end position="374"/>
    </location>
</feature>
<feature type="compositionally biased region" description="Basic and acidic residues" evidence="3">
    <location>
        <begin position="348"/>
        <end position="368"/>
    </location>
</feature>
<feature type="binding site" evidence="2">
    <location>
        <position position="382"/>
    </location>
    <ligand>
        <name>Zn(2+)</name>
        <dbReference type="ChEBI" id="CHEBI:29105"/>
    </ligand>
</feature>
<feature type="binding site" evidence="2">
    <location>
        <position position="385"/>
    </location>
    <ligand>
        <name>Zn(2+)</name>
        <dbReference type="ChEBI" id="CHEBI:29105"/>
    </ligand>
</feature>
<feature type="binding site" evidence="2">
    <location>
        <position position="396"/>
    </location>
    <ligand>
        <name>Zn(2+)</name>
        <dbReference type="ChEBI" id="CHEBI:29105"/>
    </ligand>
</feature>
<feature type="binding site" evidence="2">
    <location>
        <position position="399"/>
    </location>
    <ligand>
        <name>Zn(2+)</name>
        <dbReference type="ChEBI" id="CHEBI:29105"/>
    </ligand>
</feature>
<accession>Q9BXU3</accession>
<accession>B1B1G8</accession>
<accession>Q32NB6</accession>
<keyword id="KW-0479">Metal-binding</keyword>
<keyword id="KW-1267">Proteomics identification</keyword>
<keyword id="KW-1185">Reference proteome</keyword>
<keyword id="KW-0694">RNA-binding</keyword>
<keyword id="KW-0804">Transcription</keyword>
<keyword id="KW-0805">Transcription regulation</keyword>
<keyword id="KW-0862">Zinc</keyword>
<keyword id="KW-0863">Zinc-finger</keyword>
<reference key="1">
    <citation type="journal article" date="2001" name="Nat. Genet.">
        <title>An abundance of X-linked genes expressed in spermatogonia.</title>
        <authorList>
            <person name="Wang P.J."/>
            <person name="McCarrey J.R."/>
            <person name="Yang F."/>
            <person name="Page D.C."/>
        </authorList>
    </citation>
    <scope>NUCLEOTIDE SEQUENCE [MRNA]</scope>
    <source>
        <tissue>Testis</tissue>
    </source>
</reference>
<reference key="2">
    <citation type="journal article" date="2005" name="Nature">
        <title>The DNA sequence of the human X chromosome.</title>
        <authorList>
            <person name="Ross M.T."/>
            <person name="Grafham D.V."/>
            <person name="Coffey A.J."/>
            <person name="Scherer S."/>
            <person name="McLay K."/>
            <person name="Muzny D."/>
            <person name="Platzer M."/>
            <person name="Howell G.R."/>
            <person name="Burrows C."/>
            <person name="Bird C.P."/>
            <person name="Frankish A."/>
            <person name="Lovell F.L."/>
            <person name="Howe K.L."/>
            <person name="Ashurst J.L."/>
            <person name="Fulton R.S."/>
            <person name="Sudbrak R."/>
            <person name="Wen G."/>
            <person name="Jones M.C."/>
            <person name="Hurles M.E."/>
            <person name="Andrews T.D."/>
            <person name="Scott C.E."/>
            <person name="Searle S."/>
            <person name="Ramser J."/>
            <person name="Whittaker A."/>
            <person name="Deadman R."/>
            <person name="Carter N.P."/>
            <person name="Hunt S.E."/>
            <person name="Chen R."/>
            <person name="Cree A."/>
            <person name="Gunaratne P."/>
            <person name="Havlak P."/>
            <person name="Hodgson A."/>
            <person name="Metzker M.L."/>
            <person name="Richards S."/>
            <person name="Scott G."/>
            <person name="Steffen D."/>
            <person name="Sodergren E."/>
            <person name="Wheeler D.A."/>
            <person name="Worley K.C."/>
            <person name="Ainscough R."/>
            <person name="Ambrose K.D."/>
            <person name="Ansari-Lari M.A."/>
            <person name="Aradhya S."/>
            <person name="Ashwell R.I."/>
            <person name="Babbage A.K."/>
            <person name="Bagguley C.L."/>
            <person name="Ballabio A."/>
            <person name="Banerjee R."/>
            <person name="Barker G.E."/>
            <person name="Barlow K.F."/>
            <person name="Barrett I.P."/>
            <person name="Bates K.N."/>
            <person name="Beare D.M."/>
            <person name="Beasley H."/>
            <person name="Beasley O."/>
            <person name="Beck A."/>
            <person name="Bethel G."/>
            <person name="Blechschmidt K."/>
            <person name="Brady N."/>
            <person name="Bray-Allen S."/>
            <person name="Bridgeman A.M."/>
            <person name="Brown A.J."/>
            <person name="Brown M.J."/>
            <person name="Bonnin D."/>
            <person name="Bruford E.A."/>
            <person name="Buhay C."/>
            <person name="Burch P."/>
            <person name="Burford D."/>
            <person name="Burgess J."/>
            <person name="Burrill W."/>
            <person name="Burton J."/>
            <person name="Bye J.M."/>
            <person name="Carder C."/>
            <person name="Carrel L."/>
            <person name="Chako J."/>
            <person name="Chapman J.C."/>
            <person name="Chavez D."/>
            <person name="Chen E."/>
            <person name="Chen G."/>
            <person name="Chen Y."/>
            <person name="Chen Z."/>
            <person name="Chinault C."/>
            <person name="Ciccodicola A."/>
            <person name="Clark S.Y."/>
            <person name="Clarke G."/>
            <person name="Clee C.M."/>
            <person name="Clegg S."/>
            <person name="Clerc-Blankenburg K."/>
            <person name="Clifford K."/>
            <person name="Cobley V."/>
            <person name="Cole C.G."/>
            <person name="Conquer J.S."/>
            <person name="Corby N."/>
            <person name="Connor R.E."/>
            <person name="David R."/>
            <person name="Davies J."/>
            <person name="Davis C."/>
            <person name="Davis J."/>
            <person name="Delgado O."/>
            <person name="Deshazo D."/>
            <person name="Dhami P."/>
            <person name="Ding Y."/>
            <person name="Dinh H."/>
            <person name="Dodsworth S."/>
            <person name="Draper H."/>
            <person name="Dugan-Rocha S."/>
            <person name="Dunham A."/>
            <person name="Dunn M."/>
            <person name="Durbin K.J."/>
            <person name="Dutta I."/>
            <person name="Eades T."/>
            <person name="Ellwood M."/>
            <person name="Emery-Cohen A."/>
            <person name="Errington H."/>
            <person name="Evans K.L."/>
            <person name="Faulkner L."/>
            <person name="Francis F."/>
            <person name="Frankland J."/>
            <person name="Fraser A.E."/>
            <person name="Galgoczy P."/>
            <person name="Gilbert J."/>
            <person name="Gill R."/>
            <person name="Gloeckner G."/>
            <person name="Gregory S.G."/>
            <person name="Gribble S."/>
            <person name="Griffiths C."/>
            <person name="Grocock R."/>
            <person name="Gu Y."/>
            <person name="Gwilliam R."/>
            <person name="Hamilton C."/>
            <person name="Hart E.A."/>
            <person name="Hawes A."/>
            <person name="Heath P.D."/>
            <person name="Heitmann K."/>
            <person name="Hennig S."/>
            <person name="Hernandez J."/>
            <person name="Hinzmann B."/>
            <person name="Ho S."/>
            <person name="Hoffs M."/>
            <person name="Howden P.J."/>
            <person name="Huckle E.J."/>
            <person name="Hume J."/>
            <person name="Hunt P.J."/>
            <person name="Hunt A.R."/>
            <person name="Isherwood J."/>
            <person name="Jacob L."/>
            <person name="Johnson D."/>
            <person name="Jones S."/>
            <person name="de Jong P.J."/>
            <person name="Joseph S.S."/>
            <person name="Keenan S."/>
            <person name="Kelly S."/>
            <person name="Kershaw J.K."/>
            <person name="Khan Z."/>
            <person name="Kioschis P."/>
            <person name="Klages S."/>
            <person name="Knights A.J."/>
            <person name="Kosiura A."/>
            <person name="Kovar-Smith C."/>
            <person name="Laird G.K."/>
            <person name="Langford C."/>
            <person name="Lawlor S."/>
            <person name="Leversha M."/>
            <person name="Lewis L."/>
            <person name="Liu W."/>
            <person name="Lloyd C."/>
            <person name="Lloyd D.M."/>
            <person name="Loulseged H."/>
            <person name="Loveland J.E."/>
            <person name="Lovell J.D."/>
            <person name="Lozado R."/>
            <person name="Lu J."/>
            <person name="Lyne R."/>
            <person name="Ma J."/>
            <person name="Maheshwari M."/>
            <person name="Matthews L.H."/>
            <person name="McDowall J."/>
            <person name="McLaren S."/>
            <person name="McMurray A."/>
            <person name="Meidl P."/>
            <person name="Meitinger T."/>
            <person name="Milne S."/>
            <person name="Miner G."/>
            <person name="Mistry S.L."/>
            <person name="Morgan M."/>
            <person name="Morris S."/>
            <person name="Mueller I."/>
            <person name="Mullikin J.C."/>
            <person name="Nguyen N."/>
            <person name="Nordsiek G."/>
            <person name="Nyakatura G."/>
            <person name="O'dell C.N."/>
            <person name="Okwuonu G."/>
            <person name="Palmer S."/>
            <person name="Pandian R."/>
            <person name="Parker D."/>
            <person name="Parrish J."/>
            <person name="Pasternak S."/>
            <person name="Patel D."/>
            <person name="Pearce A.V."/>
            <person name="Pearson D.M."/>
            <person name="Pelan S.E."/>
            <person name="Perez L."/>
            <person name="Porter K.M."/>
            <person name="Ramsey Y."/>
            <person name="Reichwald K."/>
            <person name="Rhodes S."/>
            <person name="Ridler K.A."/>
            <person name="Schlessinger D."/>
            <person name="Schueler M.G."/>
            <person name="Sehra H.K."/>
            <person name="Shaw-Smith C."/>
            <person name="Shen H."/>
            <person name="Sheridan E.M."/>
            <person name="Shownkeen R."/>
            <person name="Skuce C.D."/>
            <person name="Smith M.L."/>
            <person name="Sotheran E.C."/>
            <person name="Steingruber H.E."/>
            <person name="Steward C.A."/>
            <person name="Storey R."/>
            <person name="Swann R.M."/>
            <person name="Swarbreck D."/>
            <person name="Tabor P.E."/>
            <person name="Taudien S."/>
            <person name="Taylor T."/>
            <person name="Teague B."/>
            <person name="Thomas K."/>
            <person name="Thorpe A."/>
            <person name="Timms K."/>
            <person name="Tracey A."/>
            <person name="Trevanion S."/>
            <person name="Tromans A.C."/>
            <person name="d'Urso M."/>
            <person name="Verduzco D."/>
            <person name="Villasana D."/>
            <person name="Waldron L."/>
            <person name="Wall M."/>
            <person name="Wang Q."/>
            <person name="Warren J."/>
            <person name="Warry G.L."/>
            <person name="Wei X."/>
            <person name="West A."/>
            <person name="Whitehead S.L."/>
            <person name="Whiteley M.N."/>
            <person name="Wilkinson J.E."/>
            <person name="Willey D.L."/>
            <person name="Williams G."/>
            <person name="Williams L."/>
            <person name="Williamson A."/>
            <person name="Williamson H."/>
            <person name="Wilming L."/>
            <person name="Woodmansey R.L."/>
            <person name="Wray P.W."/>
            <person name="Yen J."/>
            <person name="Zhang J."/>
            <person name="Zhou J."/>
            <person name="Zoghbi H."/>
            <person name="Zorilla S."/>
            <person name="Buck D."/>
            <person name="Reinhardt R."/>
            <person name="Poustka A."/>
            <person name="Rosenthal A."/>
            <person name="Lehrach H."/>
            <person name="Meindl A."/>
            <person name="Minx P.J."/>
            <person name="Hillier L.W."/>
            <person name="Willard H.F."/>
            <person name="Wilson R.K."/>
            <person name="Waterston R.H."/>
            <person name="Rice C.M."/>
            <person name="Vaudin M."/>
            <person name="Coulson A."/>
            <person name="Nelson D.L."/>
            <person name="Weinstock G."/>
            <person name="Sulston J.E."/>
            <person name="Durbin R.M."/>
            <person name="Hubbard T."/>
            <person name="Gibbs R.A."/>
            <person name="Beck S."/>
            <person name="Rogers J."/>
            <person name="Bentley D.R."/>
        </authorList>
    </citation>
    <scope>NUCLEOTIDE SEQUENCE [LARGE SCALE GENOMIC DNA]</scope>
</reference>
<reference key="3">
    <citation type="journal article" date="2004" name="Genome Res.">
        <title>The status, quality, and expansion of the NIH full-length cDNA project: the Mammalian Gene Collection (MGC).</title>
        <authorList>
            <consortium name="The MGC Project Team"/>
        </authorList>
    </citation>
    <scope>NUCLEOTIDE SEQUENCE [LARGE SCALE MRNA]</scope>
    <source>
        <tissue>Brain</tissue>
    </source>
</reference>
<reference key="4">
    <citation type="journal article" date="2011" name="J. Mol. Biol.">
        <title>Characterization of a family of RanBP2-type zinc fingers that can recognize single-stranded RNA.</title>
        <authorList>
            <person name="Nguyen C.D."/>
            <person name="Mansfield R.E."/>
            <person name="Leung W."/>
            <person name="Vaz P.M."/>
            <person name="Loughlin F.E."/>
            <person name="Grant R.P."/>
            <person name="Mackay J.P."/>
        </authorList>
    </citation>
    <scope>FUNCTION</scope>
</reference>
<comment type="function">
    <text evidence="1 4">Binds to ssRNA containing the consensus sequence 5'-AGGUAA-3' (PubMed:21256132). Plays a role in transcriptional repression (By similarity). Required for rapid sperm motility and timely degradation of mRNA via its interaction with CNOT1 (By similarity).</text>
</comment>
<comment type="subunit">
    <text evidence="1">Interacts with CNOT1; the interaction may inhibit CNOT1 binding to mRNA and subsequently CNOT1-mediated mRNA degradation.</text>
</comment>
<comment type="interaction">
    <interactant intactId="EBI-10301068">
        <id>Q9BXU3</id>
    </interactant>
    <interactant intactId="EBI-355815">
        <id>P48047</id>
        <label>ATP5PO</label>
    </interactant>
    <organismsDiffer>false</organismsDiffer>
    <experiments>3</experiments>
</comment>
<comment type="interaction">
    <interactant intactId="EBI-10301068">
        <id>Q9BXU3</id>
    </interactant>
    <interactant intactId="EBI-7950783">
        <id>Q96JP2</id>
        <label>MYO15B</label>
    </interactant>
    <organismsDiffer>false</organismsDiffer>
    <experiments>3</experiments>
</comment>
<comment type="interaction">
    <interactant intactId="EBI-10301068">
        <id>Q9BXU3</id>
    </interactant>
    <interactant intactId="EBI-7815040">
        <id>Q9BXI6</id>
        <label>TBC1D10A</label>
    </interactant>
    <organismsDiffer>false</organismsDiffer>
    <experiments>6</experiments>
</comment>
<comment type="interaction">
    <interactant intactId="EBI-10301068">
        <id>Q9BXU3</id>
    </interactant>
    <interactant intactId="EBI-9090990">
        <id>Q5W5X9-3</id>
        <label>TTC23</label>
    </interactant>
    <organismsDiffer>false</organismsDiffer>
    <experiments>3</experiments>
</comment>
<comment type="interaction">
    <interactant intactId="EBI-10301068">
        <id>Q9BXU3</id>
    </interactant>
    <interactant intactId="EBI-594644">
        <id>P10599</id>
        <label>TXN</label>
    </interactant>
    <organismsDiffer>false</organismsDiffer>
    <experiments>3</experiments>
</comment>
<comment type="tissue specificity">
    <text>Testis specific.</text>
</comment>
<comment type="similarity">
    <text>Belongs to the TEX13 family.</text>
</comment>
<proteinExistence type="evidence at protein level"/>